<accession>Q69Z69</accession>
<accession>B9EKQ9</accession>
<accession>Q8BQI2</accession>
<accession>Q8BR47</accession>
<accession>Q922F5</accession>
<keyword id="KW-0012">Acyltransferase</keyword>
<keyword id="KW-0025">Alternative splicing</keyword>
<keyword id="KW-0131">Cell cycle</keyword>
<keyword id="KW-0158">Chromosome</keyword>
<keyword id="KW-1017">Isopeptide bond</keyword>
<keyword id="KW-0479">Metal-binding</keyword>
<keyword id="KW-0539">Nucleus</keyword>
<keyword id="KW-0597">Phosphoprotein</keyword>
<keyword id="KW-1185">Reference proteome</keyword>
<keyword id="KW-0808">Transferase</keyword>
<keyword id="KW-0832">Ubl conjugation</keyword>
<keyword id="KW-0862">Zinc</keyword>
<keyword id="KW-0863">Zinc-finger</keyword>
<organism>
    <name type="scientific">Mus musculus</name>
    <name type="common">Mouse</name>
    <dbReference type="NCBI Taxonomy" id="10090"/>
    <lineage>
        <taxon>Eukaryota</taxon>
        <taxon>Metazoa</taxon>
        <taxon>Chordata</taxon>
        <taxon>Craniata</taxon>
        <taxon>Vertebrata</taxon>
        <taxon>Euteleostomi</taxon>
        <taxon>Mammalia</taxon>
        <taxon>Eutheria</taxon>
        <taxon>Euarchontoglires</taxon>
        <taxon>Glires</taxon>
        <taxon>Rodentia</taxon>
        <taxon>Myomorpha</taxon>
        <taxon>Muroidea</taxon>
        <taxon>Muridae</taxon>
        <taxon>Murinae</taxon>
        <taxon>Mus</taxon>
        <taxon>Mus</taxon>
    </lineage>
</organism>
<dbReference type="EC" id="2.3.1.-" evidence="1"/>
<dbReference type="EMBL" id="AK045656">
    <property type="protein sequence ID" value="BAC32447.1"/>
    <property type="molecule type" value="mRNA"/>
</dbReference>
<dbReference type="EMBL" id="AK049589">
    <property type="protein sequence ID" value="BAC33830.1"/>
    <property type="status" value="ALT_FRAME"/>
    <property type="molecule type" value="mRNA"/>
</dbReference>
<dbReference type="EMBL" id="AC102441">
    <property type="status" value="NOT_ANNOTATED_CDS"/>
    <property type="molecule type" value="Genomic_DNA"/>
</dbReference>
<dbReference type="EMBL" id="AK173297">
    <property type="protein sequence ID" value="BAD32575.1"/>
    <property type="status" value="ALT_INIT"/>
    <property type="molecule type" value="mRNA"/>
</dbReference>
<dbReference type="EMBL" id="BC008220">
    <property type="protein sequence ID" value="AAH08220.1"/>
    <property type="status" value="ALT_INIT"/>
    <property type="molecule type" value="mRNA"/>
</dbReference>
<dbReference type="EMBL" id="BC151069">
    <property type="protein sequence ID" value="AAI51070.1"/>
    <property type="molecule type" value="mRNA"/>
</dbReference>
<dbReference type="EMBL" id="BC151077">
    <property type="protein sequence ID" value="AAI51078.1"/>
    <property type="molecule type" value="mRNA"/>
</dbReference>
<dbReference type="CCDS" id="CCDS37737.1">
    <molecule id="Q69Z69-1"/>
</dbReference>
<dbReference type="RefSeq" id="NP_001074691.1">
    <molecule id="Q69Z69-1"/>
    <property type="nucleotide sequence ID" value="NM_001081222.1"/>
</dbReference>
<dbReference type="RefSeq" id="XP_036017202.1">
    <molecule id="Q69Z69-2"/>
    <property type="nucleotide sequence ID" value="XM_036161309.1"/>
</dbReference>
<dbReference type="SMR" id="Q69Z69"/>
<dbReference type="BioGRID" id="218936">
    <property type="interactions" value="3"/>
</dbReference>
<dbReference type="FunCoup" id="Q69Z69">
    <property type="interactions" value="2759"/>
</dbReference>
<dbReference type="IntAct" id="Q69Z69">
    <property type="interactions" value="2"/>
</dbReference>
<dbReference type="STRING" id="10090.ENSMUSP00000025142"/>
<dbReference type="iPTMnet" id="Q69Z69"/>
<dbReference type="PhosphoSitePlus" id="Q69Z69"/>
<dbReference type="jPOST" id="Q69Z69"/>
<dbReference type="PaxDb" id="10090-ENSMUSP00000025142"/>
<dbReference type="ProteomicsDB" id="275676">
    <molecule id="Q69Z69-1"/>
</dbReference>
<dbReference type="ProteomicsDB" id="275677">
    <molecule id="Q69Z69-2"/>
</dbReference>
<dbReference type="ProteomicsDB" id="275678">
    <molecule id="Q69Z69-3"/>
</dbReference>
<dbReference type="Antibodypedia" id="21999">
    <property type="antibodies" value="62 antibodies from 18 providers"/>
</dbReference>
<dbReference type="DNASU" id="77805"/>
<dbReference type="Ensembl" id="ENSMUST00000025142.13">
    <molecule id="Q69Z69-1"/>
    <property type="protein sequence ID" value="ENSMUSP00000025142.6"/>
    <property type="gene ID" value="ENSMUSG00000024293.17"/>
</dbReference>
<dbReference type="Ensembl" id="ENSMUST00000115864.8">
    <molecule id="Q69Z69-2"/>
    <property type="protein sequence ID" value="ENSMUSP00000111530.2"/>
    <property type="gene ID" value="ENSMUSG00000024293.17"/>
</dbReference>
<dbReference type="Ensembl" id="ENSMUST00000127099.9">
    <molecule id="Q69Z69-3"/>
    <property type="protein sequence ID" value="ENSMUSP00000157382.2"/>
    <property type="gene ID" value="ENSMUSG00000024293.17"/>
</dbReference>
<dbReference type="GeneID" id="77805"/>
<dbReference type="KEGG" id="mmu:77805"/>
<dbReference type="UCSC" id="uc008eav.1">
    <molecule id="Q69Z69-1"/>
    <property type="organism name" value="mouse"/>
</dbReference>
<dbReference type="UCSC" id="uc008eaw.1">
    <molecule id="Q69Z69-2"/>
    <property type="organism name" value="mouse"/>
</dbReference>
<dbReference type="AGR" id="MGI:1925055"/>
<dbReference type="CTD" id="114799"/>
<dbReference type="MGI" id="MGI:1925055">
    <property type="gene designation" value="Esco1"/>
</dbReference>
<dbReference type="VEuPathDB" id="HostDB:ENSMUSG00000024293"/>
<dbReference type="eggNOG" id="KOG3014">
    <property type="taxonomic scope" value="Eukaryota"/>
</dbReference>
<dbReference type="GeneTree" id="ENSGT00940000157762"/>
<dbReference type="HOGENOM" id="CLU_012128_0_0_1"/>
<dbReference type="InParanoid" id="Q69Z69"/>
<dbReference type="OrthoDB" id="428854at2759"/>
<dbReference type="PhylomeDB" id="Q69Z69"/>
<dbReference type="TreeFam" id="TF314027"/>
<dbReference type="Reactome" id="R-MMU-2468052">
    <property type="pathway name" value="Establishment of Sister Chromatid Cohesion"/>
</dbReference>
<dbReference type="BioGRID-ORCS" id="77805">
    <property type="hits" value="3 hits in 117 CRISPR screens"/>
</dbReference>
<dbReference type="ChiTaRS" id="Esco1">
    <property type="organism name" value="mouse"/>
</dbReference>
<dbReference type="PRO" id="PR:Q69Z69"/>
<dbReference type="Proteomes" id="UP000000589">
    <property type="component" value="Chromosome 18"/>
</dbReference>
<dbReference type="RNAct" id="Q69Z69">
    <property type="molecule type" value="protein"/>
</dbReference>
<dbReference type="Bgee" id="ENSMUSG00000024293">
    <property type="expression patterns" value="Expressed in cleaving embryo and 249 other cell types or tissues"/>
</dbReference>
<dbReference type="ExpressionAtlas" id="Q69Z69">
    <property type="expression patterns" value="baseline and differential"/>
</dbReference>
<dbReference type="GO" id="GO:0000785">
    <property type="term" value="C:chromatin"/>
    <property type="evidence" value="ECO:0000250"/>
    <property type="project" value="UniProtKB"/>
</dbReference>
<dbReference type="GO" id="GO:0005694">
    <property type="term" value="C:chromosome"/>
    <property type="evidence" value="ECO:0000250"/>
    <property type="project" value="UniProtKB"/>
</dbReference>
<dbReference type="GO" id="GO:0005634">
    <property type="term" value="C:nucleus"/>
    <property type="evidence" value="ECO:0007669"/>
    <property type="project" value="UniProtKB-SubCell"/>
</dbReference>
<dbReference type="GO" id="GO:0016407">
    <property type="term" value="F:acetyltransferase activity"/>
    <property type="evidence" value="ECO:0000250"/>
    <property type="project" value="UniProtKB"/>
</dbReference>
<dbReference type="GO" id="GO:0008080">
    <property type="term" value="F:N-acetyltransferase activity"/>
    <property type="evidence" value="ECO:0000250"/>
    <property type="project" value="UniProtKB"/>
</dbReference>
<dbReference type="GO" id="GO:0061733">
    <property type="term" value="F:protein-lysine-acetyltransferase activity"/>
    <property type="evidence" value="ECO:0000250"/>
    <property type="project" value="UniProtKB"/>
</dbReference>
<dbReference type="GO" id="GO:0008270">
    <property type="term" value="F:zinc ion binding"/>
    <property type="evidence" value="ECO:0000250"/>
    <property type="project" value="UniProtKB"/>
</dbReference>
<dbReference type="GO" id="GO:0018394">
    <property type="term" value="P:peptidyl-lysine acetylation"/>
    <property type="evidence" value="ECO:0000250"/>
    <property type="project" value="UniProtKB"/>
</dbReference>
<dbReference type="GO" id="GO:0034421">
    <property type="term" value="P:post-translational protein acetylation"/>
    <property type="evidence" value="ECO:0000250"/>
    <property type="project" value="UniProtKB"/>
</dbReference>
<dbReference type="GO" id="GO:0006275">
    <property type="term" value="P:regulation of DNA replication"/>
    <property type="evidence" value="ECO:0000250"/>
    <property type="project" value="UniProtKB"/>
</dbReference>
<dbReference type="InterPro" id="IPR028005">
    <property type="entry name" value="AcTrfase_ESCO_Znf_dom"/>
</dbReference>
<dbReference type="InterPro" id="IPR028009">
    <property type="entry name" value="ESCO_Acetyltransf_dom"/>
</dbReference>
<dbReference type="PANTHER" id="PTHR45884">
    <property type="entry name" value="N-ACETYLTRANSFERASE ECO"/>
    <property type="match status" value="1"/>
</dbReference>
<dbReference type="PANTHER" id="PTHR45884:SF1">
    <property type="entry name" value="N-ACETYLTRANSFERASE ESCO1"/>
    <property type="match status" value="1"/>
</dbReference>
<dbReference type="Pfam" id="PF13880">
    <property type="entry name" value="Acetyltransf_13"/>
    <property type="match status" value="1"/>
</dbReference>
<dbReference type="Pfam" id="PF13878">
    <property type="entry name" value="zf-C2H2_3"/>
    <property type="match status" value="1"/>
</dbReference>
<proteinExistence type="evidence at transcript level"/>
<protein>
    <recommendedName>
        <fullName>N-acetyltransferase ESCO1</fullName>
        <ecNumber evidence="1">2.3.1.-</ecNumber>
    </recommendedName>
    <alternativeName>
        <fullName>Establishment of cohesion 1 homolog 1</fullName>
        <shortName>ECO1 homolog 1</shortName>
    </alternativeName>
</protein>
<reference key="1">
    <citation type="journal article" date="2005" name="Science">
        <title>The transcriptional landscape of the mammalian genome.</title>
        <authorList>
            <person name="Carninci P."/>
            <person name="Kasukawa T."/>
            <person name="Katayama S."/>
            <person name="Gough J."/>
            <person name="Frith M.C."/>
            <person name="Maeda N."/>
            <person name="Oyama R."/>
            <person name="Ravasi T."/>
            <person name="Lenhard B."/>
            <person name="Wells C."/>
            <person name="Kodzius R."/>
            <person name="Shimokawa K."/>
            <person name="Bajic V.B."/>
            <person name="Brenner S.E."/>
            <person name="Batalov S."/>
            <person name="Forrest A.R."/>
            <person name="Zavolan M."/>
            <person name="Davis M.J."/>
            <person name="Wilming L.G."/>
            <person name="Aidinis V."/>
            <person name="Allen J.E."/>
            <person name="Ambesi-Impiombato A."/>
            <person name="Apweiler R."/>
            <person name="Aturaliya R.N."/>
            <person name="Bailey T.L."/>
            <person name="Bansal M."/>
            <person name="Baxter L."/>
            <person name="Beisel K.W."/>
            <person name="Bersano T."/>
            <person name="Bono H."/>
            <person name="Chalk A.M."/>
            <person name="Chiu K.P."/>
            <person name="Choudhary V."/>
            <person name="Christoffels A."/>
            <person name="Clutterbuck D.R."/>
            <person name="Crowe M.L."/>
            <person name="Dalla E."/>
            <person name="Dalrymple B.P."/>
            <person name="de Bono B."/>
            <person name="Della Gatta G."/>
            <person name="di Bernardo D."/>
            <person name="Down T."/>
            <person name="Engstrom P."/>
            <person name="Fagiolini M."/>
            <person name="Faulkner G."/>
            <person name="Fletcher C.F."/>
            <person name="Fukushima T."/>
            <person name="Furuno M."/>
            <person name="Futaki S."/>
            <person name="Gariboldi M."/>
            <person name="Georgii-Hemming P."/>
            <person name="Gingeras T.R."/>
            <person name="Gojobori T."/>
            <person name="Green R.E."/>
            <person name="Gustincich S."/>
            <person name="Harbers M."/>
            <person name="Hayashi Y."/>
            <person name="Hensch T.K."/>
            <person name="Hirokawa N."/>
            <person name="Hill D."/>
            <person name="Huminiecki L."/>
            <person name="Iacono M."/>
            <person name="Ikeo K."/>
            <person name="Iwama A."/>
            <person name="Ishikawa T."/>
            <person name="Jakt M."/>
            <person name="Kanapin A."/>
            <person name="Katoh M."/>
            <person name="Kawasawa Y."/>
            <person name="Kelso J."/>
            <person name="Kitamura H."/>
            <person name="Kitano H."/>
            <person name="Kollias G."/>
            <person name="Krishnan S.P."/>
            <person name="Kruger A."/>
            <person name="Kummerfeld S.K."/>
            <person name="Kurochkin I.V."/>
            <person name="Lareau L.F."/>
            <person name="Lazarevic D."/>
            <person name="Lipovich L."/>
            <person name="Liu J."/>
            <person name="Liuni S."/>
            <person name="McWilliam S."/>
            <person name="Madan Babu M."/>
            <person name="Madera M."/>
            <person name="Marchionni L."/>
            <person name="Matsuda H."/>
            <person name="Matsuzawa S."/>
            <person name="Miki H."/>
            <person name="Mignone F."/>
            <person name="Miyake S."/>
            <person name="Morris K."/>
            <person name="Mottagui-Tabar S."/>
            <person name="Mulder N."/>
            <person name="Nakano N."/>
            <person name="Nakauchi H."/>
            <person name="Ng P."/>
            <person name="Nilsson R."/>
            <person name="Nishiguchi S."/>
            <person name="Nishikawa S."/>
            <person name="Nori F."/>
            <person name="Ohara O."/>
            <person name="Okazaki Y."/>
            <person name="Orlando V."/>
            <person name="Pang K.C."/>
            <person name="Pavan W.J."/>
            <person name="Pavesi G."/>
            <person name="Pesole G."/>
            <person name="Petrovsky N."/>
            <person name="Piazza S."/>
            <person name="Reed J."/>
            <person name="Reid J.F."/>
            <person name="Ring B.Z."/>
            <person name="Ringwald M."/>
            <person name="Rost B."/>
            <person name="Ruan Y."/>
            <person name="Salzberg S.L."/>
            <person name="Sandelin A."/>
            <person name="Schneider C."/>
            <person name="Schoenbach C."/>
            <person name="Sekiguchi K."/>
            <person name="Semple C.A."/>
            <person name="Seno S."/>
            <person name="Sessa L."/>
            <person name="Sheng Y."/>
            <person name="Shibata Y."/>
            <person name="Shimada H."/>
            <person name="Shimada K."/>
            <person name="Silva D."/>
            <person name="Sinclair B."/>
            <person name="Sperling S."/>
            <person name="Stupka E."/>
            <person name="Sugiura K."/>
            <person name="Sultana R."/>
            <person name="Takenaka Y."/>
            <person name="Taki K."/>
            <person name="Tammoja K."/>
            <person name="Tan S.L."/>
            <person name="Tang S."/>
            <person name="Taylor M.S."/>
            <person name="Tegner J."/>
            <person name="Teichmann S.A."/>
            <person name="Ueda H.R."/>
            <person name="van Nimwegen E."/>
            <person name="Verardo R."/>
            <person name="Wei C.L."/>
            <person name="Yagi K."/>
            <person name="Yamanishi H."/>
            <person name="Zabarovsky E."/>
            <person name="Zhu S."/>
            <person name="Zimmer A."/>
            <person name="Hide W."/>
            <person name="Bult C."/>
            <person name="Grimmond S.M."/>
            <person name="Teasdale R.D."/>
            <person name="Liu E.T."/>
            <person name="Brusic V."/>
            <person name="Quackenbush J."/>
            <person name="Wahlestedt C."/>
            <person name="Mattick J.S."/>
            <person name="Hume D.A."/>
            <person name="Kai C."/>
            <person name="Sasaki D."/>
            <person name="Tomaru Y."/>
            <person name="Fukuda S."/>
            <person name="Kanamori-Katayama M."/>
            <person name="Suzuki M."/>
            <person name="Aoki J."/>
            <person name="Arakawa T."/>
            <person name="Iida J."/>
            <person name="Imamura K."/>
            <person name="Itoh M."/>
            <person name="Kato T."/>
            <person name="Kawaji H."/>
            <person name="Kawagashira N."/>
            <person name="Kawashima T."/>
            <person name="Kojima M."/>
            <person name="Kondo S."/>
            <person name="Konno H."/>
            <person name="Nakano K."/>
            <person name="Ninomiya N."/>
            <person name="Nishio T."/>
            <person name="Okada M."/>
            <person name="Plessy C."/>
            <person name="Shibata K."/>
            <person name="Shiraki T."/>
            <person name="Suzuki S."/>
            <person name="Tagami M."/>
            <person name="Waki K."/>
            <person name="Watahiki A."/>
            <person name="Okamura-Oho Y."/>
            <person name="Suzuki H."/>
            <person name="Kawai J."/>
            <person name="Hayashizaki Y."/>
        </authorList>
    </citation>
    <scope>NUCLEOTIDE SEQUENCE [LARGE SCALE MRNA] (ISOFORM 2)</scope>
    <scope>NUCLEOTIDE SEQUENCE [LARGE SCALE MRNA] OF 1-234 (ISOFORM 1)</scope>
    <source>
        <strain>C57BL/6J</strain>
        <tissue>Corpora quadrigemina</tissue>
    </source>
</reference>
<reference key="2">
    <citation type="journal article" date="2009" name="PLoS Biol.">
        <title>Lineage-specific biology revealed by a finished genome assembly of the mouse.</title>
        <authorList>
            <person name="Church D.M."/>
            <person name="Goodstadt L."/>
            <person name="Hillier L.W."/>
            <person name="Zody M.C."/>
            <person name="Goldstein S."/>
            <person name="She X."/>
            <person name="Bult C.J."/>
            <person name="Agarwala R."/>
            <person name="Cherry J.L."/>
            <person name="DiCuccio M."/>
            <person name="Hlavina W."/>
            <person name="Kapustin Y."/>
            <person name="Meric P."/>
            <person name="Maglott D."/>
            <person name="Birtle Z."/>
            <person name="Marques A.C."/>
            <person name="Graves T."/>
            <person name="Zhou S."/>
            <person name="Teague B."/>
            <person name="Potamousis K."/>
            <person name="Churas C."/>
            <person name="Place M."/>
            <person name="Herschleb J."/>
            <person name="Runnheim R."/>
            <person name="Forrest D."/>
            <person name="Amos-Landgraf J."/>
            <person name="Schwartz D.C."/>
            <person name="Cheng Z."/>
            <person name="Lindblad-Toh K."/>
            <person name="Eichler E.E."/>
            <person name="Ponting C.P."/>
        </authorList>
    </citation>
    <scope>NUCLEOTIDE SEQUENCE [LARGE SCALE GENOMIC DNA]</scope>
    <source>
        <strain>C57BL/6J</strain>
    </source>
</reference>
<reference key="3">
    <citation type="journal article" date="2004" name="Genome Res.">
        <title>The status, quality, and expansion of the NIH full-length cDNA project: the Mammalian Gene Collection (MGC).</title>
        <authorList>
            <consortium name="The MGC Project Team"/>
        </authorList>
    </citation>
    <scope>NUCLEOTIDE SEQUENCE [LARGE SCALE MRNA] (ISOFORM 1)</scope>
    <scope>NUCLEOTIDE SEQUENCE [LARGE SCALE MRNA] OF 411-843 (ISOFORM 3)</scope>
    <source>
        <strain>FVB/N</strain>
        <tissue>Brain</tissue>
        <tissue>Mammary tumor</tissue>
    </source>
</reference>
<reference key="4">
    <citation type="journal article" date="2004" name="DNA Res.">
        <title>Prediction of the coding sequences of mouse homologues of KIAA gene: IV. The complete nucleotide sequences of 500 mouse KIAA-homologous cDNAs identified by screening of terminal sequences of cDNA clones randomly sampled from size-fractionated libraries.</title>
        <authorList>
            <person name="Okazaki N."/>
            <person name="Kikuno R."/>
            <person name="Ohara R."/>
            <person name="Inamoto S."/>
            <person name="Koseki H."/>
            <person name="Hiraoka S."/>
            <person name="Saga Y."/>
            <person name="Seino S."/>
            <person name="Nishimura M."/>
            <person name="Kaisho T."/>
            <person name="Hoshino K."/>
            <person name="Kitamura H."/>
            <person name="Nagase T."/>
            <person name="Ohara O."/>
            <person name="Koga H."/>
        </authorList>
    </citation>
    <scope>NUCLEOTIDE SEQUENCE [LARGE SCALE MRNA] OF 1-691 (ISOFORM 1)</scope>
</reference>
<name>ESCO1_MOUSE</name>
<feature type="chain" id="PRO_0000074540" description="N-acetyltransferase ESCO1">
    <location>
        <begin position="1"/>
        <end position="843"/>
    </location>
</feature>
<feature type="zinc finger region" description="CCHH-type">
    <location>
        <begin position="620"/>
        <end position="644"/>
    </location>
</feature>
<feature type="region of interest" description="Disordered" evidence="2">
    <location>
        <begin position="1"/>
        <end position="78"/>
    </location>
</feature>
<feature type="region of interest" description="Disordered" evidence="2">
    <location>
        <begin position="262"/>
        <end position="300"/>
    </location>
</feature>
<feature type="region of interest" description="Disordered" evidence="2">
    <location>
        <begin position="546"/>
        <end position="584"/>
    </location>
</feature>
<feature type="compositionally biased region" description="Acidic residues" evidence="2">
    <location>
        <begin position="18"/>
        <end position="28"/>
    </location>
</feature>
<feature type="compositionally biased region" description="Polar residues" evidence="2">
    <location>
        <begin position="66"/>
        <end position="78"/>
    </location>
</feature>
<feature type="compositionally biased region" description="Polar residues" evidence="2">
    <location>
        <begin position="269"/>
        <end position="278"/>
    </location>
</feature>
<feature type="compositionally biased region" description="Basic and acidic residues" evidence="2">
    <location>
        <begin position="566"/>
        <end position="584"/>
    </location>
</feature>
<feature type="binding site" evidence="1">
    <location>
        <begin position="775"/>
        <end position="777"/>
    </location>
    <ligand>
        <name>acetyl-CoA</name>
        <dbReference type="ChEBI" id="CHEBI:57288"/>
    </ligand>
</feature>
<feature type="binding site" evidence="1">
    <location>
        <begin position="783"/>
        <end position="788"/>
    </location>
    <ligand>
        <name>acetyl-CoA</name>
        <dbReference type="ChEBI" id="CHEBI:57288"/>
    </ligand>
</feature>
<feature type="binding site" evidence="1">
    <location>
        <begin position="815"/>
        <end position="817"/>
    </location>
    <ligand>
        <name>acetyl-CoA</name>
        <dbReference type="ChEBI" id="CHEBI:57288"/>
    </ligand>
</feature>
<feature type="modified residue" description="Phosphoserine" evidence="1">
    <location>
        <position position="202"/>
    </location>
</feature>
<feature type="modified residue" description="Phosphoserine" evidence="1">
    <location>
        <position position="415"/>
    </location>
</feature>
<feature type="cross-link" description="Glycyl lysine isopeptide (Lys-Gly) (interchain with G-Cter in SUMO2)" evidence="1">
    <location>
        <position position="335"/>
    </location>
</feature>
<feature type="splice variant" id="VSP_014031" description="In isoform 2." evidence="4">
    <location>
        <begin position="1"/>
        <end position="524"/>
    </location>
</feature>
<feature type="splice variant" id="VSP_014032" description="In isoform 2." evidence="4">
    <original>TNPLENTAAASTLLSQAKIDEDRTFP</original>
    <variation>MLQIHQHPVAVDFRRKNFSEILSKQT</variation>
    <location>
        <begin position="525"/>
        <end position="550"/>
    </location>
</feature>
<feature type="splice variant" id="VSP_014033" description="In isoform 3." evidence="3">
    <original>GWKKERILAEYPDGRIIMVLPEDPKYALKKVDEIRE</original>
    <variation>VLLINHHECGSEEEFITSLFLSMSNFRYTQRSLLPY</variation>
    <location>
        <begin position="655"/>
        <end position="690"/>
    </location>
</feature>
<feature type="splice variant" id="VSP_014034" description="In isoform 3." evidence="3">
    <location>
        <begin position="691"/>
        <end position="843"/>
    </location>
</feature>
<feature type="sequence conflict" description="In Ref. 4; BAD32575." evidence="5" ref="4">
    <original>EM</original>
    <variation>DG</variation>
    <location>
        <begin position="690"/>
        <end position="691"/>
    </location>
</feature>
<sequence>MSIQEKSKENSSIVTKESEDENLEEEVESSQNSPTKKSGSKEAVKTPVRFSNKSKTNESEFGMRMSTRSASCSADKTATNSFNKNTVTLKGQSQESSKTKKLCQEKLSLGILKGNEQLHRRSQRLQQLTECTTRSLRSREIHGQIQTVKQNQQSARREQCNSTQSKCNKVKVNQKHVKRKVLEIKSDCKEDRHSVTNEVINSPKGKKRKVQHQTTSTCSSQCNQGSEKCLQKTSRKEEIKPVPVTADIRKLKAATSVVSKKNELRKSAHTQVSTSTKRPQIPLPLVPEHSDDQELEQAGKSKRGSILQLCEEIAGEIESDTVEVKKESSCVESVKEEKPAEVKLQGTDAERQILHHKEANQDVRSNRFFPSRKTKPVKCVLNGINSSTKKNSNWTKIKLSKFNSVQQHKLDSQVSPKLNLLQTGLSTSVLEMPHPVSQSTFLEMKAHGNVTCQRDKMKGIKSEEVKINNIAIEINKATKRDPGNCNLDNHIKPSPDSSLDNQMKLSCESAPDQNFSICSASEVETNPLENTAAASTLLSQAKIDEDRTFPGSAPNQQHSVLSDEASINRKNRDVPPNHSQLKHDSHLEITIPKSLKLKDSEKVDEKQLVIDAGHKRFGAVSCNICGMLYTASNPEDETQHLLFHNQFISAVKYVGWKKERILAEYPDGRIIMVLPEDPKYALKKVDEIREMVDNDLGFQQAPLMCYSRTKTLLFISNDKKVVGCLIAEHIQWGYRVIEEKLPVIRSEEEKVRFERQKAWCCSTLPEPAICGISRIWVFSMMRRKKIASRMIECLRSNFIYGSYLSKEEIAFSDPTPDGKLFATQYCGTGQFLVYNFINGQNTT</sequence>
<comment type="function">
    <text evidence="1">Acetyltransferase required for the establishment of sister chromatid cohesion. Couples the processes of cohesion and DNA replication to ensure that only sister chromatids become paired together. In contrast to the structural cohesins, the deposition and establishment factors are required only during S phase. Acts by mediating the acetylation of cohesin component SMC3.</text>
</comment>
<comment type="catalytic activity">
    <reaction evidence="1">
        <text>L-lysyl-[protein] + acetyl-CoA = N(6)-acetyl-L-lysyl-[protein] + CoA + H(+)</text>
        <dbReference type="Rhea" id="RHEA:45948"/>
        <dbReference type="Rhea" id="RHEA-COMP:9752"/>
        <dbReference type="Rhea" id="RHEA-COMP:10731"/>
        <dbReference type="ChEBI" id="CHEBI:15378"/>
        <dbReference type="ChEBI" id="CHEBI:29969"/>
        <dbReference type="ChEBI" id="CHEBI:57287"/>
        <dbReference type="ChEBI" id="CHEBI:57288"/>
        <dbReference type="ChEBI" id="CHEBI:61930"/>
    </reaction>
</comment>
<comment type="subunit">
    <text evidence="1">The subunit structure is controversial. Monomer. Homodimer.</text>
</comment>
<comment type="subcellular location">
    <subcellularLocation>
        <location evidence="1">Nucleus</location>
    </subcellularLocation>
    <subcellularLocation>
        <location evidence="1">Chromosome</location>
    </subcellularLocation>
    <text evidence="1">Nuclear at interphase, associated with chromosomes during mitosis.</text>
</comment>
<comment type="alternative products">
    <event type="alternative splicing"/>
    <isoform>
        <id>Q69Z69-1</id>
        <name>1</name>
        <sequence type="displayed"/>
    </isoform>
    <isoform>
        <id>Q69Z69-2</id>
        <name>2</name>
        <sequence type="described" ref="VSP_014031 VSP_014032"/>
    </isoform>
    <isoform>
        <id>Q69Z69-3</id>
        <name>3</name>
        <sequence type="described" ref="VSP_014033 VSP_014034"/>
    </isoform>
</comment>
<comment type="domain">
    <text evidence="1">The N-terminal region seems to be responsible for association with chromosomes, thus excluding any involvement of the Zn finger in this process.</text>
</comment>
<comment type="PTM">
    <text evidence="1">Phosphorylated during mitosis.</text>
</comment>
<comment type="similarity">
    <text evidence="5">Belongs to the acetyltransferase family. ECO subfamily.</text>
</comment>
<comment type="sequence caution" evidence="5">
    <conflict type="erroneous initiation">
        <sequence resource="EMBL-CDS" id="AAH08220"/>
    </conflict>
</comment>
<comment type="sequence caution" evidence="5">
    <conflict type="frameshift">
        <sequence resource="EMBL-CDS" id="BAC33830"/>
    </conflict>
</comment>
<comment type="sequence caution" evidence="5">
    <conflict type="erroneous initiation">
        <sequence resource="EMBL-CDS" id="BAD32575"/>
    </conflict>
</comment>
<evidence type="ECO:0000250" key="1">
    <source>
        <dbReference type="UniProtKB" id="Q5FWF5"/>
    </source>
</evidence>
<evidence type="ECO:0000256" key="2">
    <source>
        <dbReference type="SAM" id="MobiDB-lite"/>
    </source>
</evidence>
<evidence type="ECO:0000303" key="3">
    <source>
    </source>
</evidence>
<evidence type="ECO:0000303" key="4">
    <source>
    </source>
</evidence>
<evidence type="ECO:0000305" key="5"/>
<gene>
    <name type="primary">Esco1</name>
    <name type="synonym">Kiaa1911</name>
</gene>